<feature type="chain" id="PRO_1000081416" description="Small ribosomal subunit protein bS20">
    <location>
        <begin position="1"/>
        <end position="88"/>
    </location>
</feature>
<sequence length="88" mass="9669">MANTPSAKKAVRKIAARTEINKSRRSRVRTFVRKLEDALLSGDKQAAEVAFKAVEPELMRAASKGVVHKNTAARKVSRLAKRVKALNA</sequence>
<name>RS20_BRUC2</name>
<gene>
    <name evidence="1" type="primary">rpsT</name>
    <name type="ordered locus">BCAN_A2227</name>
</gene>
<reference key="1">
    <citation type="submission" date="2007-10" db="EMBL/GenBank/DDBJ databases">
        <title>Brucella canis ATCC 23365 whole genome shotgun sequencing project.</title>
        <authorList>
            <person name="Setubal J.C."/>
            <person name="Bowns C."/>
            <person name="Boyle S."/>
            <person name="Crasta O.R."/>
            <person name="Czar M.J."/>
            <person name="Dharmanolla C."/>
            <person name="Gillespie J.J."/>
            <person name="Kenyon R.W."/>
            <person name="Lu J."/>
            <person name="Mane S."/>
            <person name="Mohapatra S."/>
            <person name="Nagrani S."/>
            <person name="Purkayastha A."/>
            <person name="Rajasimha H.K."/>
            <person name="Shallom J.M."/>
            <person name="Shallom S."/>
            <person name="Shukla M."/>
            <person name="Snyder E.E."/>
            <person name="Sobral B.W."/>
            <person name="Wattam A.R."/>
            <person name="Will R."/>
            <person name="Williams K."/>
            <person name="Yoo H."/>
            <person name="Bruce D."/>
            <person name="Detter C."/>
            <person name="Munk C."/>
            <person name="Brettin T.S."/>
        </authorList>
    </citation>
    <scope>NUCLEOTIDE SEQUENCE [LARGE SCALE GENOMIC DNA]</scope>
    <source>
        <strain>ATCC 23365 / NCTC 10854 / RM-666</strain>
    </source>
</reference>
<protein>
    <recommendedName>
        <fullName evidence="1">Small ribosomal subunit protein bS20</fullName>
    </recommendedName>
    <alternativeName>
        <fullName evidence="2">30S ribosomal protein S20</fullName>
    </alternativeName>
</protein>
<comment type="function">
    <text evidence="1">Binds directly to 16S ribosomal RNA.</text>
</comment>
<comment type="similarity">
    <text evidence="1">Belongs to the bacterial ribosomal protein bS20 family.</text>
</comment>
<proteinExistence type="inferred from homology"/>
<evidence type="ECO:0000255" key="1">
    <source>
        <dbReference type="HAMAP-Rule" id="MF_00500"/>
    </source>
</evidence>
<evidence type="ECO:0000305" key="2"/>
<accession>A9MAB4</accession>
<keyword id="KW-1185">Reference proteome</keyword>
<keyword id="KW-0687">Ribonucleoprotein</keyword>
<keyword id="KW-0689">Ribosomal protein</keyword>
<keyword id="KW-0694">RNA-binding</keyword>
<keyword id="KW-0699">rRNA-binding</keyword>
<dbReference type="EMBL" id="CP000872">
    <property type="protein sequence ID" value="ABX63209.1"/>
    <property type="molecule type" value="Genomic_DNA"/>
</dbReference>
<dbReference type="RefSeq" id="WP_002965247.1">
    <property type="nucleotide sequence ID" value="NC_010103.1"/>
</dbReference>
<dbReference type="SMR" id="A9MAB4"/>
<dbReference type="GeneID" id="97534562"/>
<dbReference type="KEGG" id="bcs:BCAN_A2227"/>
<dbReference type="HOGENOM" id="CLU_160655_3_0_5"/>
<dbReference type="Proteomes" id="UP000001385">
    <property type="component" value="Chromosome I"/>
</dbReference>
<dbReference type="GO" id="GO:0015935">
    <property type="term" value="C:small ribosomal subunit"/>
    <property type="evidence" value="ECO:0007669"/>
    <property type="project" value="TreeGrafter"/>
</dbReference>
<dbReference type="GO" id="GO:0070181">
    <property type="term" value="F:small ribosomal subunit rRNA binding"/>
    <property type="evidence" value="ECO:0007669"/>
    <property type="project" value="TreeGrafter"/>
</dbReference>
<dbReference type="GO" id="GO:0003735">
    <property type="term" value="F:structural constituent of ribosome"/>
    <property type="evidence" value="ECO:0007669"/>
    <property type="project" value="InterPro"/>
</dbReference>
<dbReference type="GO" id="GO:0006412">
    <property type="term" value="P:translation"/>
    <property type="evidence" value="ECO:0007669"/>
    <property type="project" value="UniProtKB-UniRule"/>
</dbReference>
<dbReference type="FunFam" id="1.20.58.110:FF:000001">
    <property type="entry name" value="30S ribosomal protein S20"/>
    <property type="match status" value="1"/>
</dbReference>
<dbReference type="Gene3D" id="1.20.58.110">
    <property type="entry name" value="Ribosomal protein S20"/>
    <property type="match status" value="1"/>
</dbReference>
<dbReference type="HAMAP" id="MF_00500">
    <property type="entry name" value="Ribosomal_bS20"/>
    <property type="match status" value="1"/>
</dbReference>
<dbReference type="InterPro" id="IPR002583">
    <property type="entry name" value="Ribosomal_bS20"/>
</dbReference>
<dbReference type="InterPro" id="IPR036510">
    <property type="entry name" value="Ribosomal_bS20_sf"/>
</dbReference>
<dbReference type="NCBIfam" id="TIGR00029">
    <property type="entry name" value="S20"/>
    <property type="match status" value="1"/>
</dbReference>
<dbReference type="PANTHER" id="PTHR33398">
    <property type="entry name" value="30S RIBOSOMAL PROTEIN S20"/>
    <property type="match status" value="1"/>
</dbReference>
<dbReference type="PANTHER" id="PTHR33398:SF1">
    <property type="entry name" value="SMALL RIBOSOMAL SUBUNIT PROTEIN BS20C"/>
    <property type="match status" value="1"/>
</dbReference>
<dbReference type="Pfam" id="PF01649">
    <property type="entry name" value="Ribosomal_S20p"/>
    <property type="match status" value="1"/>
</dbReference>
<dbReference type="SUPFAM" id="SSF46992">
    <property type="entry name" value="Ribosomal protein S20"/>
    <property type="match status" value="1"/>
</dbReference>
<organism>
    <name type="scientific">Brucella canis (strain ATCC 23365 / NCTC 10854 / RM-666)</name>
    <dbReference type="NCBI Taxonomy" id="483179"/>
    <lineage>
        <taxon>Bacteria</taxon>
        <taxon>Pseudomonadati</taxon>
        <taxon>Pseudomonadota</taxon>
        <taxon>Alphaproteobacteria</taxon>
        <taxon>Hyphomicrobiales</taxon>
        <taxon>Brucellaceae</taxon>
        <taxon>Brucella/Ochrobactrum group</taxon>
        <taxon>Brucella</taxon>
    </lineage>
</organism>